<name>OTC_BACCQ</name>
<keyword id="KW-0056">Arginine metabolism</keyword>
<keyword id="KW-0963">Cytoplasm</keyword>
<keyword id="KW-0808">Transferase</keyword>
<sequence length="316" mass="35289">MSTVQVPKLNTKDLLTLEELTKEEIISLIEFAIYLKKNKQEPLLQGKILGLIFDKHSTRTRVSFEAGMVQLGGHGMFLSGKEMQMGRGETVSDTAKVLSQYIDGIMIRTFSHADVEELAKESSIPVINGLTDDHHPCQALADLMTIYEETNTFKGIKLAYVGDGNNVCHSLLLASAKVGMHMTVATPIGYEPNEEIVKKALAIAKETGAEIEILHNPELAVNEADFIYTDVWMSMGQEGEEEKYTLFQPYQINNELVKHAKQTYRFLHCLPAHREEEVTGEIIDGPKSIVFEQAGNRLHAQKALLVSLFKNVEELS</sequence>
<reference key="1">
    <citation type="journal article" date="2009" name="J. Bacteriol.">
        <title>Complete genome sequence of the extremophilic Bacillus cereus strain Q1 with industrial applications.</title>
        <authorList>
            <person name="Xiong Z."/>
            <person name="Jiang Y."/>
            <person name="Qi D."/>
            <person name="Lu H."/>
            <person name="Yang F."/>
            <person name="Yang J."/>
            <person name="Chen L."/>
            <person name="Sun L."/>
            <person name="Xu X."/>
            <person name="Xue Y."/>
            <person name="Zhu Y."/>
            <person name="Jin Q."/>
        </authorList>
    </citation>
    <scope>NUCLEOTIDE SEQUENCE [LARGE SCALE GENOMIC DNA]</scope>
    <source>
        <strain>Q1</strain>
    </source>
</reference>
<protein>
    <recommendedName>
        <fullName evidence="2">Ornithine carbamoyltransferase</fullName>
        <shortName evidence="2">OTCase</shortName>
        <ecNumber evidence="2">2.1.3.3</ecNumber>
    </recommendedName>
</protein>
<feature type="chain" id="PRO_1000163961" description="Ornithine carbamoyltransferase">
    <location>
        <begin position="1"/>
        <end position="316"/>
    </location>
</feature>
<feature type="binding site" evidence="2">
    <location>
        <begin position="57"/>
        <end position="60"/>
    </location>
    <ligand>
        <name>carbamoyl phosphate</name>
        <dbReference type="ChEBI" id="CHEBI:58228"/>
    </ligand>
</feature>
<feature type="binding site" evidence="2">
    <location>
        <position position="84"/>
    </location>
    <ligand>
        <name>carbamoyl phosphate</name>
        <dbReference type="ChEBI" id="CHEBI:58228"/>
    </ligand>
</feature>
<feature type="binding site" evidence="2">
    <location>
        <position position="108"/>
    </location>
    <ligand>
        <name>carbamoyl phosphate</name>
        <dbReference type="ChEBI" id="CHEBI:58228"/>
    </ligand>
</feature>
<feature type="binding site" evidence="2">
    <location>
        <begin position="135"/>
        <end position="138"/>
    </location>
    <ligand>
        <name>carbamoyl phosphate</name>
        <dbReference type="ChEBI" id="CHEBI:58228"/>
    </ligand>
</feature>
<feature type="binding site" evidence="2">
    <location>
        <position position="166"/>
    </location>
    <ligand>
        <name>L-ornithine</name>
        <dbReference type="ChEBI" id="CHEBI:46911"/>
    </ligand>
</feature>
<feature type="binding site" evidence="2">
    <location>
        <position position="230"/>
    </location>
    <ligand>
        <name>L-ornithine</name>
        <dbReference type="ChEBI" id="CHEBI:46911"/>
    </ligand>
</feature>
<feature type="binding site" evidence="2">
    <location>
        <begin position="234"/>
        <end position="235"/>
    </location>
    <ligand>
        <name>L-ornithine</name>
        <dbReference type="ChEBI" id="CHEBI:46911"/>
    </ligand>
</feature>
<feature type="binding site" evidence="2">
    <location>
        <begin position="269"/>
        <end position="270"/>
    </location>
    <ligand>
        <name>carbamoyl phosphate</name>
        <dbReference type="ChEBI" id="CHEBI:58228"/>
    </ligand>
</feature>
<feature type="binding site" evidence="2">
    <location>
        <position position="297"/>
    </location>
    <ligand>
        <name>carbamoyl phosphate</name>
        <dbReference type="ChEBI" id="CHEBI:58228"/>
    </ligand>
</feature>
<dbReference type="EC" id="2.1.3.3" evidence="2"/>
<dbReference type="EMBL" id="CP000227">
    <property type="protein sequence ID" value="ACM14346.1"/>
    <property type="molecule type" value="Genomic_DNA"/>
</dbReference>
<dbReference type="SMR" id="B9IXC5"/>
<dbReference type="KEGG" id="bcq:BCQ_3918"/>
<dbReference type="HOGENOM" id="CLU_043846_3_2_9"/>
<dbReference type="UniPathway" id="UPA00254">
    <property type="reaction ID" value="UER00365"/>
</dbReference>
<dbReference type="Proteomes" id="UP000000441">
    <property type="component" value="Chromosome"/>
</dbReference>
<dbReference type="GO" id="GO:0005737">
    <property type="term" value="C:cytoplasm"/>
    <property type="evidence" value="ECO:0007669"/>
    <property type="project" value="UniProtKB-SubCell"/>
</dbReference>
<dbReference type="GO" id="GO:0016597">
    <property type="term" value="F:amino acid binding"/>
    <property type="evidence" value="ECO:0007669"/>
    <property type="project" value="InterPro"/>
</dbReference>
<dbReference type="GO" id="GO:0004585">
    <property type="term" value="F:ornithine carbamoyltransferase activity"/>
    <property type="evidence" value="ECO:0007669"/>
    <property type="project" value="UniProtKB-UniRule"/>
</dbReference>
<dbReference type="GO" id="GO:0042450">
    <property type="term" value="P:arginine biosynthetic process via ornithine"/>
    <property type="evidence" value="ECO:0007669"/>
    <property type="project" value="TreeGrafter"/>
</dbReference>
<dbReference type="GO" id="GO:0019547">
    <property type="term" value="P:arginine catabolic process to ornithine"/>
    <property type="evidence" value="ECO:0007669"/>
    <property type="project" value="UniProtKB-UniRule"/>
</dbReference>
<dbReference type="GO" id="GO:0019240">
    <property type="term" value="P:citrulline biosynthetic process"/>
    <property type="evidence" value="ECO:0007669"/>
    <property type="project" value="TreeGrafter"/>
</dbReference>
<dbReference type="FunFam" id="3.40.50.1370:FF:000008">
    <property type="entry name" value="Ornithine carbamoyltransferase"/>
    <property type="match status" value="1"/>
</dbReference>
<dbReference type="FunFam" id="3.40.50.1370:FF:000016">
    <property type="entry name" value="Ornithine carbamoyltransferase"/>
    <property type="match status" value="1"/>
</dbReference>
<dbReference type="Gene3D" id="3.40.50.1370">
    <property type="entry name" value="Aspartate/ornithine carbamoyltransferase"/>
    <property type="match status" value="2"/>
</dbReference>
<dbReference type="HAMAP" id="MF_01109">
    <property type="entry name" value="OTCase"/>
    <property type="match status" value="1"/>
</dbReference>
<dbReference type="InterPro" id="IPR006132">
    <property type="entry name" value="Asp/Orn_carbamoyltranf_P-bd"/>
</dbReference>
<dbReference type="InterPro" id="IPR006130">
    <property type="entry name" value="Asp/Orn_carbamoylTrfase"/>
</dbReference>
<dbReference type="InterPro" id="IPR036901">
    <property type="entry name" value="Asp/Orn_carbamoylTrfase_sf"/>
</dbReference>
<dbReference type="InterPro" id="IPR006131">
    <property type="entry name" value="Asp_carbamoyltransf_Asp/Orn-bd"/>
</dbReference>
<dbReference type="InterPro" id="IPR002292">
    <property type="entry name" value="Orn/put_carbamltrans"/>
</dbReference>
<dbReference type="InterPro" id="IPR024904">
    <property type="entry name" value="OTCase_ArgI"/>
</dbReference>
<dbReference type="NCBIfam" id="TIGR00658">
    <property type="entry name" value="orni_carb_tr"/>
    <property type="match status" value="1"/>
</dbReference>
<dbReference type="NCBIfam" id="NF001986">
    <property type="entry name" value="PRK00779.1"/>
    <property type="match status" value="1"/>
</dbReference>
<dbReference type="PANTHER" id="PTHR45753">
    <property type="entry name" value="ORNITHINE CARBAMOYLTRANSFERASE, MITOCHONDRIAL"/>
    <property type="match status" value="1"/>
</dbReference>
<dbReference type="PANTHER" id="PTHR45753:SF3">
    <property type="entry name" value="ORNITHINE TRANSCARBAMYLASE, MITOCHONDRIAL"/>
    <property type="match status" value="1"/>
</dbReference>
<dbReference type="Pfam" id="PF00185">
    <property type="entry name" value="OTCace"/>
    <property type="match status" value="1"/>
</dbReference>
<dbReference type="Pfam" id="PF02729">
    <property type="entry name" value="OTCace_N"/>
    <property type="match status" value="1"/>
</dbReference>
<dbReference type="PRINTS" id="PR00100">
    <property type="entry name" value="AOTCASE"/>
</dbReference>
<dbReference type="PRINTS" id="PR00102">
    <property type="entry name" value="OTCASE"/>
</dbReference>
<dbReference type="SUPFAM" id="SSF53671">
    <property type="entry name" value="Aspartate/ornithine carbamoyltransferase"/>
    <property type="match status" value="1"/>
</dbReference>
<dbReference type="PROSITE" id="PS00097">
    <property type="entry name" value="CARBAMOYLTRANSFERASE"/>
    <property type="match status" value="1"/>
</dbReference>
<accession>B9IXC5</accession>
<organism>
    <name type="scientific">Bacillus cereus (strain Q1)</name>
    <dbReference type="NCBI Taxonomy" id="361100"/>
    <lineage>
        <taxon>Bacteria</taxon>
        <taxon>Bacillati</taxon>
        <taxon>Bacillota</taxon>
        <taxon>Bacilli</taxon>
        <taxon>Bacillales</taxon>
        <taxon>Bacillaceae</taxon>
        <taxon>Bacillus</taxon>
        <taxon>Bacillus cereus group</taxon>
    </lineage>
</organism>
<comment type="function">
    <text evidence="1">Reversibly catalyzes the transfer of the carbamoyl group from carbamoyl phosphate (CP) to the N(epsilon) atom of ornithine (ORN) to produce L-citrulline.</text>
</comment>
<comment type="catalytic activity">
    <reaction evidence="2">
        <text>carbamoyl phosphate + L-ornithine = L-citrulline + phosphate + H(+)</text>
        <dbReference type="Rhea" id="RHEA:19513"/>
        <dbReference type="ChEBI" id="CHEBI:15378"/>
        <dbReference type="ChEBI" id="CHEBI:43474"/>
        <dbReference type="ChEBI" id="CHEBI:46911"/>
        <dbReference type="ChEBI" id="CHEBI:57743"/>
        <dbReference type="ChEBI" id="CHEBI:58228"/>
        <dbReference type="EC" id="2.1.3.3"/>
    </reaction>
</comment>
<comment type="pathway">
    <text evidence="2">Amino-acid degradation; L-arginine degradation via ADI pathway; carbamoyl phosphate from L-arginine: step 2/2.</text>
</comment>
<comment type="subcellular location">
    <subcellularLocation>
        <location evidence="2">Cytoplasm</location>
    </subcellularLocation>
</comment>
<comment type="similarity">
    <text evidence="2">Belongs to the aspartate/ornithine carbamoyltransferase superfamily. OTCase family.</text>
</comment>
<gene>
    <name evidence="2" type="primary">arcB</name>
    <name type="ordered locus">BCQ_3918</name>
</gene>
<evidence type="ECO:0000250" key="1"/>
<evidence type="ECO:0000255" key="2">
    <source>
        <dbReference type="HAMAP-Rule" id="MF_01109"/>
    </source>
</evidence>
<proteinExistence type="inferred from homology"/>